<evidence type="ECO:0000250" key="1"/>
<evidence type="ECO:0000256" key="2">
    <source>
        <dbReference type="SAM" id="MobiDB-lite"/>
    </source>
</evidence>
<evidence type="ECO:0000305" key="3"/>
<organism>
    <name type="scientific">Eremothecium gossypii (strain ATCC 10895 / CBS 109.51 / FGSC 9923 / NRRL Y-1056)</name>
    <name type="common">Yeast</name>
    <name type="synonym">Ashbya gossypii</name>
    <dbReference type="NCBI Taxonomy" id="284811"/>
    <lineage>
        <taxon>Eukaryota</taxon>
        <taxon>Fungi</taxon>
        <taxon>Dikarya</taxon>
        <taxon>Ascomycota</taxon>
        <taxon>Saccharomycotina</taxon>
        <taxon>Saccharomycetes</taxon>
        <taxon>Saccharomycetales</taxon>
        <taxon>Saccharomycetaceae</taxon>
        <taxon>Eremothecium</taxon>
    </lineage>
</organism>
<feature type="chain" id="PRO_0000302028" description="Mediator of RNA polymerase II transcription subunit 1">
    <location>
        <begin position="1"/>
        <end position="426"/>
    </location>
</feature>
<feature type="region of interest" description="Disordered" evidence="2">
    <location>
        <begin position="324"/>
        <end position="356"/>
    </location>
</feature>
<feature type="compositionally biased region" description="Basic residues" evidence="2">
    <location>
        <begin position="336"/>
        <end position="347"/>
    </location>
</feature>
<comment type="function">
    <text evidence="1">Component of the Mediator complex, a coactivator involved in the regulated transcription of nearly all RNA polymerase II-dependent genes. Mediator functions as a bridge to convey information from gene-specific regulatory proteins to the basal RNA polymerase II transcription machinery. Mediator is recruited to promoters by direct interactions with regulatory proteins and serves as a scaffold for the assembly of a functional preinitiation complex with RNA polymerase II and the general transcription factors (By similarity).</text>
</comment>
<comment type="subunit">
    <text evidence="1">Component of the Mediator complex.</text>
</comment>
<comment type="subcellular location">
    <subcellularLocation>
        <location evidence="1">Nucleus</location>
    </subcellularLocation>
</comment>
<comment type="similarity">
    <text evidence="3">Belongs to the Mediator complex subunit 1 family.</text>
</comment>
<reference key="1">
    <citation type="journal article" date="2004" name="Science">
        <title>The Ashbya gossypii genome as a tool for mapping the ancient Saccharomyces cerevisiae genome.</title>
        <authorList>
            <person name="Dietrich F.S."/>
            <person name="Voegeli S."/>
            <person name="Brachat S."/>
            <person name="Lerch A."/>
            <person name="Gates K."/>
            <person name="Steiner S."/>
            <person name="Mohr C."/>
            <person name="Poehlmann R."/>
            <person name="Luedi P."/>
            <person name="Choi S."/>
            <person name="Wing R.A."/>
            <person name="Flavier A."/>
            <person name="Gaffney T.D."/>
            <person name="Philippsen P."/>
        </authorList>
    </citation>
    <scope>NUCLEOTIDE SEQUENCE [LARGE SCALE GENOMIC DNA]</scope>
    <source>
        <strain>ATCC 10895 / CBS 109.51 / FGSC 9923 / NRRL Y-1056</strain>
    </source>
</reference>
<reference key="2">
    <citation type="journal article" date="2013" name="G3 (Bethesda)">
        <title>Genomes of Ashbya fungi isolated from insects reveal four mating-type loci, numerous translocations, lack of transposons, and distinct gene duplications.</title>
        <authorList>
            <person name="Dietrich F.S."/>
            <person name="Voegeli S."/>
            <person name="Kuo S."/>
            <person name="Philippsen P."/>
        </authorList>
    </citation>
    <scope>GENOME REANNOTATION</scope>
    <source>
        <strain>ATCC 10895 / CBS 109.51 / FGSC 9923 / NRRL Y-1056</strain>
    </source>
</reference>
<name>MED1_EREGS</name>
<keyword id="KW-0010">Activator</keyword>
<keyword id="KW-0539">Nucleus</keyword>
<keyword id="KW-1185">Reference proteome</keyword>
<keyword id="KW-0804">Transcription</keyword>
<keyword id="KW-0805">Transcription regulation</keyword>
<dbReference type="EMBL" id="AE016817">
    <property type="protein sequence ID" value="AAS51578.1"/>
    <property type="molecule type" value="Genomic_DNA"/>
</dbReference>
<dbReference type="RefSeq" id="NP_983754.1">
    <property type="nucleotide sequence ID" value="NM_209107.1"/>
</dbReference>
<dbReference type="SMR" id="Q75BA8"/>
<dbReference type="FunCoup" id="Q75BA8">
    <property type="interactions" value="218"/>
</dbReference>
<dbReference type="STRING" id="284811.Q75BA8"/>
<dbReference type="EnsemblFungi" id="AAS51578">
    <property type="protein sequence ID" value="AAS51578"/>
    <property type="gene ID" value="AGOS_ADL341C"/>
</dbReference>
<dbReference type="GeneID" id="4620010"/>
<dbReference type="KEGG" id="ago:AGOS_ADL341C"/>
<dbReference type="eggNOG" id="ENOG502QW0Y">
    <property type="taxonomic scope" value="Eukaryota"/>
</dbReference>
<dbReference type="HOGENOM" id="CLU_021764_0_0_1"/>
<dbReference type="InParanoid" id="Q75BA8"/>
<dbReference type="OMA" id="NDKFGIY"/>
<dbReference type="OrthoDB" id="5310959at2759"/>
<dbReference type="Proteomes" id="UP000000591">
    <property type="component" value="Chromosome IV"/>
</dbReference>
<dbReference type="GO" id="GO:0070847">
    <property type="term" value="C:core mediator complex"/>
    <property type="evidence" value="ECO:0007669"/>
    <property type="project" value="EnsemblFungi"/>
</dbReference>
<dbReference type="GO" id="GO:0016592">
    <property type="term" value="C:mediator complex"/>
    <property type="evidence" value="ECO:0007669"/>
    <property type="project" value="InterPro"/>
</dbReference>
<dbReference type="GO" id="GO:0003712">
    <property type="term" value="F:transcription coregulator activity"/>
    <property type="evidence" value="ECO:0007669"/>
    <property type="project" value="InterPro"/>
</dbReference>
<dbReference type="GO" id="GO:0000122">
    <property type="term" value="P:negative regulation of transcription by RNA polymerase II"/>
    <property type="evidence" value="ECO:0007669"/>
    <property type="project" value="EnsemblFungi"/>
</dbReference>
<dbReference type="GO" id="GO:0032968">
    <property type="term" value="P:positive regulation of transcription elongation by RNA polymerase II"/>
    <property type="evidence" value="ECO:0007669"/>
    <property type="project" value="EnsemblFungi"/>
</dbReference>
<dbReference type="GO" id="GO:0060261">
    <property type="term" value="P:positive regulation of transcription initiation by RNA polymerase II"/>
    <property type="evidence" value="ECO:0007669"/>
    <property type="project" value="EnsemblFungi"/>
</dbReference>
<dbReference type="GO" id="GO:0051123">
    <property type="term" value="P:RNA polymerase II preinitiation complex assembly"/>
    <property type="evidence" value="ECO:0007669"/>
    <property type="project" value="EnsemblFungi"/>
</dbReference>
<dbReference type="InterPro" id="IPR019680">
    <property type="entry name" value="Mediator_Med1"/>
</dbReference>
<dbReference type="Pfam" id="PF10744">
    <property type="entry name" value="Med1"/>
    <property type="match status" value="1"/>
</dbReference>
<accession>Q75BA8</accession>
<gene>
    <name type="primary">MED1</name>
    <name type="ordered locus">ADL341C</name>
</gene>
<sequence>MPDAYVESLGKMIAILVNYKPGSITLENITRLCQTMGLESFVDQVSANISRLSIASKIIVIDIDYEVTDGKVIDVKLVLASNFDKFDYFNGEANILHRSLTTYSDLHEFHHNLKFLTLLDACSSIDIESNVSQFDLFEYYSMLPQYMQSYLDDNGAQLTVQTNLNDRFGIYLLDHSEKKVAKLTFAATQDPNQRYYEYKYSSETKEWINQSAESYTTGITLVFELLGDPPTYLPKDSLPPEHPDEGFTSASASELQRRFAFKCQNPRVTLVNDFTVDVYPASTFQLLNDNICLCFDILRRQKWWHTVLYPISQLLLHQGQDSAVGDAPAPAAQPPLHRRRSSNKGCRRASAAESATLGDENMHQLTLTEIMNKSVIPEDDAMMDDRIELYVNENYVYLGTQEGCSFYNDPIERWEAFVESLRQMLT</sequence>
<protein>
    <recommendedName>
        <fullName>Mediator of RNA polymerase II transcription subunit 1</fullName>
    </recommendedName>
    <alternativeName>
        <fullName>Mediator complex subunit 1</fullName>
    </alternativeName>
</protein>
<proteinExistence type="inferred from homology"/>